<proteinExistence type="inferred from homology"/>
<evidence type="ECO:0000255" key="1">
    <source>
        <dbReference type="HAMAP-Rule" id="MF_00015"/>
    </source>
</evidence>
<gene>
    <name evidence="1" type="primary">lexA</name>
    <name type="ordered locus">BAD_1115</name>
</gene>
<reference key="1">
    <citation type="submission" date="2006-12" db="EMBL/GenBank/DDBJ databases">
        <title>Bifidobacterium adolescentis complete genome sequence.</title>
        <authorList>
            <person name="Suzuki T."/>
            <person name="Tsuda Y."/>
            <person name="Kanou N."/>
            <person name="Inoue T."/>
            <person name="Kumazaki K."/>
            <person name="Nagano S."/>
            <person name="Hirai S."/>
            <person name="Tanaka K."/>
            <person name="Watanabe K."/>
        </authorList>
    </citation>
    <scope>NUCLEOTIDE SEQUENCE [LARGE SCALE GENOMIC DNA]</scope>
    <source>
        <strain>ATCC 15703 / DSM 20083 / NCTC 11814 / E194a</strain>
    </source>
</reference>
<dbReference type="EC" id="3.4.21.88" evidence="1"/>
<dbReference type="EMBL" id="AP009256">
    <property type="protein sequence ID" value="BAF39896.1"/>
    <property type="molecule type" value="Genomic_DNA"/>
</dbReference>
<dbReference type="RefSeq" id="WP_003810781.1">
    <property type="nucleotide sequence ID" value="NZ_CAXVNC010000002.1"/>
</dbReference>
<dbReference type="SMR" id="A1A2G3"/>
<dbReference type="STRING" id="367928.BAD_1115"/>
<dbReference type="MEROPS" id="S24.001"/>
<dbReference type="PaxDb" id="1680-BADO_1165"/>
<dbReference type="GeneID" id="4556287"/>
<dbReference type="KEGG" id="bad:BAD_1115"/>
<dbReference type="HOGENOM" id="CLU_066192_45_0_11"/>
<dbReference type="Proteomes" id="UP000008702">
    <property type="component" value="Chromosome"/>
</dbReference>
<dbReference type="GO" id="GO:0003677">
    <property type="term" value="F:DNA binding"/>
    <property type="evidence" value="ECO:0007669"/>
    <property type="project" value="UniProtKB-UniRule"/>
</dbReference>
<dbReference type="GO" id="GO:0004252">
    <property type="term" value="F:serine-type endopeptidase activity"/>
    <property type="evidence" value="ECO:0007669"/>
    <property type="project" value="UniProtKB-UniRule"/>
</dbReference>
<dbReference type="GO" id="GO:0006281">
    <property type="term" value="P:DNA repair"/>
    <property type="evidence" value="ECO:0007669"/>
    <property type="project" value="UniProtKB-UniRule"/>
</dbReference>
<dbReference type="GO" id="GO:0006260">
    <property type="term" value="P:DNA replication"/>
    <property type="evidence" value="ECO:0007669"/>
    <property type="project" value="UniProtKB-UniRule"/>
</dbReference>
<dbReference type="GO" id="GO:0045892">
    <property type="term" value="P:negative regulation of DNA-templated transcription"/>
    <property type="evidence" value="ECO:0007669"/>
    <property type="project" value="UniProtKB-UniRule"/>
</dbReference>
<dbReference type="GO" id="GO:0006508">
    <property type="term" value="P:proteolysis"/>
    <property type="evidence" value="ECO:0007669"/>
    <property type="project" value="InterPro"/>
</dbReference>
<dbReference type="GO" id="GO:0009432">
    <property type="term" value="P:SOS response"/>
    <property type="evidence" value="ECO:0007669"/>
    <property type="project" value="UniProtKB-UniRule"/>
</dbReference>
<dbReference type="CDD" id="cd06529">
    <property type="entry name" value="S24_LexA-like"/>
    <property type="match status" value="1"/>
</dbReference>
<dbReference type="FunFam" id="2.10.109.10:FF:000001">
    <property type="entry name" value="LexA repressor"/>
    <property type="match status" value="1"/>
</dbReference>
<dbReference type="Gene3D" id="2.10.109.10">
    <property type="entry name" value="Umud Fragment, subunit A"/>
    <property type="match status" value="1"/>
</dbReference>
<dbReference type="Gene3D" id="1.10.10.10">
    <property type="entry name" value="Winged helix-like DNA-binding domain superfamily/Winged helix DNA-binding domain"/>
    <property type="match status" value="1"/>
</dbReference>
<dbReference type="HAMAP" id="MF_00015">
    <property type="entry name" value="LexA"/>
    <property type="match status" value="1"/>
</dbReference>
<dbReference type="InterPro" id="IPR006200">
    <property type="entry name" value="LexA"/>
</dbReference>
<dbReference type="InterPro" id="IPR039418">
    <property type="entry name" value="LexA-like"/>
</dbReference>
<dbReference type="InterPro" id="IPR036286">
    <property type="entry name" value="LexA/Signal_pep-like_sf"/>
</dbReference>
<dbReference type="InterPro" id="IPR006199">
    <property type="entry name" value="LexA_DNA-bd_dom"/>
</dbReference>
<dbReference type="InterPro" id="IPR050077">
    <property type="entry name" value="LexA_repressor"/>
</dbReference>
<dbReference type="InterPro" id="IPR006197">
    <property type="entry name" value="Peptidase_S24_LexA"/>
</dbReference>
<dbReference type="InterPro" id="IPR015927">
    <property type="entry name" value="Peptidase_S24_S26A/B/C"/>
</dbReference>
<dbReference type="InterPro" id="IPR036388">
    <property type="entry name" value="WH-like_DNA-bd_sf"/>
</dbReference>
<dbReference type="InterPro" id="IPR036390">
    <property type="entry name" value="WH_DNA-bd_sf"/>
</dbReference>
<dbReference type="NCBIfam" id="TIGR00498">
    <property type="entry name" value="lexA"/>
    <property type="match status" value="1"/>
</dbReference>
<dbReference type="PANTHER" id="PTHR33516">
    <property type="entry name" value="LEXA REPRESSOR"/>
    <property type="match status" value="1"/>
</dbReference>
<dbReference type="PANTHER" id="PTHR33516:SF2">
    <property type="entry name" value="LEXA REPRESSOR-RELATED"/>
    <property type="match status" value="1"/>
</dbReference>
<dbReference type="Pfam" id="PF01726">
    <property type="entry name" value="LexA_DNA_bind"/>
    <property type="match status" value="1"/>
</dbReference>
<dbReference type="Pfam" id="PF00717">
    <property type="entry name" value="Peptidase_S24"/>
    <property type="match status" value="1"/>
</dbReference>
<dbReference type="PRINTS" id="PR00726">
    <property type="entry name" value="LEXASERPTASE"/>
</dbReference>
<dbReference type="SUPFAM" id="SSF51306">
    <property type="entry name" value="LexA/Signal peptidase"/>
    <property type="match status" value="1"/>
</dbReference>
<dbReference type="SUPFAM" id="SSF46785">
    <property type="entry name" value="Winged helix' DNA-binding domain"/>
    <property type="match status" value="1"/>
</dbReference>
<protein>
    <recommendedName>
        <fullName evidence="1">LexA repressor</fullName>
        <ecNumber evidence="1">3.4.21.88</ecNumber>
    </recommendedName>
</protein>
<keyword id="KW-0068">Autocatalytic cleavage</keyword>
<keyword id="KW-0227">DNA damage</keyword>
<keyword id="KW-0234">DNA repair</keyword>
<keyword id="KW-0235">DNA replication</keyword>
<keyword id="KW-0238">DNA-binding</keyword>
<keyword id="KW-0378">Hydrolase</keyword>
<keyword id="KW-1185">Reference proteome</keyword>
<keyword id="KW-0678">Repressor</keyword>
<keyword id="KW-0742">SOS response</keyword>
<keyword id="KW-0804">Transcription</keyword>
<keyword id="KW-0805">Transcription regulation</keyword>
<sequence length="257" mass="28169">MFDFIGVSRYASKELRKEPIVSTIPFTPKKSDERPDESTLTDRQRKVLDAIKTHLAKQGFAPSFREIGEAAGLKSPSSVKHQLQVLDEKGFIRMNANKGRAIEVVNLNDEEPNGKVAQVIPFPSQDDACGSIMASHDVPLVGRIAAGVPITAEQHVDDVMRLPERLTGTGNLFMLEVHGDSMIDAAICDGDFVVVREQNSAENGDIVAALLDDEATVKTFRKDHGHVWLIPHNPAYSPIDGTHAEIMGKVVTVLRKI</sequence>
<name>LEXA_BIFAA</name>
<accession>A1A2G3</accession>
<comment type="function">
    <text evidence="1">Represses a number of genes involved in the response to DNA damage (SOS response), including recA and lexA. In the presence of single-stranded DNA, RecA interacts with LexA causing an autocatalytic cleavage which disrupts the DNA-binding part of LexA, leading to derepression of the SOS regulon and eventually DNA repair.</text>
</comment>
<comment type="catalytic activity">
    <reaction evidence="1">
        <text>Hydrolysis of Ala-|-Gly bond in repressor LexA.</text>
        <dbReference type="EC" id="3.4.21.88"/>
    </reaction>
</comment>
<comment type="subunit">
    <text evidence="1">Homodimer.</text>
</comment>
<comment type="similarity">
    <text evidence="1">Belongs to the peptidase S24 family.</text>
</comment>
<organism>
    <name type="scientific">Bifidobacterium adolescentis (strain ATCC 15703 / DSM 20083 / NCTC 11814 / E194a)</name>
    <dbReference type="NCBI Taxonomy" id="367928"/>
    <lineage>
        <taxon>Bacteria</taxon>
        <taxon>Bacillati</taxon>
        <taxon>Actinomycetota</taxon>
        <taxon>Actinomycetes</taxon>
        <taxon>Bifidobacteriales</taxon>
        <taxon>Bifidobacteriaceae</taxon>
        <taxon>Bifidobacterium</taxon>
    </lineage>
</organism>
<feature type="chain" id="PRO_0000322715" description="LexA repressor">
    <location>
        <begin position="1"/>
        <end position="257"/>
    </location>
</feature>
<feature type="DNA-binding region" description="H-T-H motif" evidence="1">
    <location>
        <begin position="64"/>
        <end position="84"/>
    </location>
</feature>
<feature type="active site" description="For autocatalytic cleavage activity" evidence="1">
    <location>
        <position position="181"/>
    </location>
</feature>
<feature type="active site" description="For autocatalytic cleavage activity" evidence="1">
    <location>
        <position position="218"/>
    </location>
</feature>
<feature type="site" description="Cleavage; by autolysis" evidence="1">
    <location>
        <begin position="146"/>
        <end position="147"/>
    </location>
</feature>